<reference key="1">
    <citation type="journal article" date="2005" name="Proc. Natl. Acad. Sci. U.S.A.">
        <title>Comparison of the complete genome sequences of Pseudomonas syringae pv. syringae B728a and pv. tomato DC3000.</title>
        <authorList>
            <person name="Feil H."/>
            <person name="Feil W.S."/>
            <person name="Chain P."/>
            <person name="Larimer F."/>
            <person name="Dibartolo G."/>
            <person name="Copeland A."/>
            <person name="Lykidis A."/>
            <person name="Trong S."/>
            <person name="Nolan M."/>
            <person name="Goltsman E."/>
            <person name="Thiel J."/>
            <person name="Malfatti S."/>
            <person name="Loper J.E."/>
            <person name="Lapidus A."/>
            <person name="Detter J.C."/>
            <person name="Land M."/>
            <person name="Richardson P.M."/>
            <person name="Kyrpides N.C."/>
            <person name="Ivanova N."/>
            <person name="Lindow S.E."/>
        </authorList>
    </citation>
    <scope>NUCLEOTIDE SEQUENCE [LARGE SCALE GENOMIC DNA]</scope>
    <source>
        <strain>B728a</strain>
    </source>
</reference>
<comment type="function">
    <text evidence="1">Involved in the post-transcriptional modification of the uridine at the wobble position (U34) of tRNA(Lys), tRNA(Glu) and tRNA(Gln). Catalyzes the conversion of 2-thiouridine (S2U-RNA) to 2-selenouridine (Se2U-RNA). Acts in a two-step process involving geranylation of 2-thiouridine (S2U) to S-geranyl-2-thiouridine (geS2U) and subsequent selenation of the latter derivative to 2-selenouridine (Se2U) in the tRNA chain.</text>
</comment>
<comment type="catalytic activity">
    <reaction evidence="1">
        <text>5-methylaminomethyl-2-thiouridine(34) in tRNA + selenophosphate + (2E)-geranyl diphosphate + H2O + H(+) = 5-methylaminomethyl-2-selenouridine(34) in tRNA + (2E)-thiogeraniol + phosphate + diphosphate</text>
        <dbReference type="Rhea" id="RHEA:42716"/>
        <dbReference type="Rhea" id="RHEA-COMP:10195"/>
        <dbReference type="Rhea" id="RHEA-COMP:10196"/>
        <dbReference type="ChEBI" id="CHEBI:15377"/>
        <dbReference type="ChEBI" id="CHEBI:15378"/>
        <dbReference type="ChEBI" id="CHEBI:16144"/>
        <dbReference type="ChEBI" id="CHEBI:33019"/>
        <dbReference type="ChEBI" id="CHEBI:43474"/>
        <dbReference type="ChEBI" id="CHEBI:58057"/>
        <dbReference type="ChEBI" id="CHEBI:74455"/>
        <dbReference type="ChEBI" id="CHEBI:82743"/>
        <dbReference type="ChEBI" id="CHEBI:143703"/>
        <dbReference type="EC" id="2.9.1.3"/>
    </reaction>
    <physiologicalReaction direction="left-to-right" evidence="1">
        <dbReference type="Rhea" id="RHEA:42717"/>
    </physiologicalReaction>
</comment>
<comment type="catalytic activity">
    <reaction evidence="1">
        <text>5-methylaminomethyl-2-thiouridine(34) in tRNA + (2E)-geranyl diphosphate = 5-methylaminomethyl-S-(2E)-geranyl-thiouridine(34) in tRNA + diphosphate</text>
        <dbReference type="Rhea" id="RHEA:14085"/>
        <dbReference type="Rhea" id="RHEA-COMP:10195"/>
        <dbReference type="Rhea" id="RHEA-COMP:14654"/>
        <dbReference type="ChEBI" id="CHEBI:33019"/>
        <dbReference type="ChEBI" id="CHEBI:58057"/>
        <dbReference type="ChEBI" id="CHEBI:74455"/>
        <dbReference type="ChEBI" id="CHEBI:140632"/>
    </reaction>
    <physiologicalReaction direction="left-to-right" evidence="1">
        <dbReference type="Rhea" id="RHEA:14086"/>
    </physiologicalReaction>
</comment>
<comment type="catalytic activity">
    <reaction evidence="1">
        <text>5-methylaminomethyl-S-(2E)-geranyl-thiouridine(34) in tRNA + selenophosphate + H(+) = 5-methylaminomethyl-2-(Se-phospho)selenouridine(34) in tRNA + (2E)-thiogeraniol</text>
        <dbReference type="Rhea" id="RHEA:60172"/>
        <dbReference type="Rhea" id="RHEA-COMP:14654"/>
        <dbReference type="Rhea" id="RHEA-COMP:15523"/>
        <dbReference type="ChEBI" id="CHEBI:15378"/>
        <dbReference type="ChEBI" id="CHEBI:16144"/>
        <dbReference type="ChEBI" id="CHEBI:140632"/>
        <dbReference type="ChEBI" id="CHEBI:143702"/>
        <dbReference type="ChEBI" id="CHEBI:143703"/>
    </reaction>
    <physiologicalReaction direction="left-to-right" evidence="1">
        <dbReference type="Rhea" id="RHEA:60173"/>
    </physiologicalReaction>
</comment>
<comment type="catalytic activity">
    <reaction evidence="1">
        <text>5-methylaminomethyl-2-(Se-phospho)selenouridine(34) in tRNA + H2O = 5-methylaminomethyl-2-selenouridine(34) in tRNA + phosphate</text>
        <dbReference type="Rhea" id="RHEA:60176"/>
        <dbReference type="Rhea" id="RHEA-COMP:10196"/>
        <dbReference type="Rhea" id="RHEA-COMP:15523"/>
        <dbReference type="ChEBI" id="CHEBI:15377"/>
        <dbReference type="ChEBI" id="CHEBI:43474"/>
        <dbReference type="ChEBI" id="CHEBI:82743"/>
        <dbReference type="ChEBI" id="CHEBI:143702"/>
    </reaction>
    <physiologicalReaction direction="left-to-right" evidence="1">
        <dbReference type="Rhea" id="RHEA:60177"/>
    </physiologicalReaction>
</comment>
<comment type="subunit">
    <text evidence="1">Monomer.</text>
</comment>
<comment type="similarity">
    <text evidence="1">Belongs to the SelU family.</text>
</comment>
<keyword id="KW-0711">Selenium</keyword>
<keyword id="KW-0808">Transferase</keyword>
<name>SELU_PSEU2</name>
<dbReference type="EC" id="2.9.1.3" evidence="1"/>
<dbReference type="EMBL" id="CP000075">
    <property type="protein sequence ID" value="AAY35767.1"/>
    <property type="molecule type" value="Genomic_DNA"/>
</dbReference>
<dbReference type="RefSeq" id="WP_011266576.1">
    <property type="nucleotide sequence ID" value="NC_007005.1"/>
</dbReference>
<dbReference type="RefSeq" id="YP_233805.1">
    <property type="nucleotide sequence ID" value="NC_007005.1"/>
</dbReference>
<dbReference type="SMR" id="Q4ZYK5"/>
<dbReference type="STRING" id="205918.Psyr_0697"/>
<dbReference type="KEGG" id="psb:Psyr_0697"/>
<dbReference type="PATRIC" id="fig|205918.7.peg.722"/>
<dbReference type="eggNOG" id="COG2603">
    <property type="taxonomic scope" value="Bacteria"/>
</dbReference>
<dbReference type="HOGENOM" id="CLU_043456_1_0_6"/>
<dbReference type="OrthoDB" id="9808735at2"/>
<dbReference type="Proteomes" id="UP000000426">
    <property type="component" value="Chromosome"/>
</dbReference>
<dbReference type="GO" id="GO:0016765">
    <property type="term" value="F:transferase activity, transferring alkyl or aryl (other than methyl) groups"/>
    <property type="evidence" value="ECO:0007669"/>
    <property type="project" value="UniProtKB-UniRule"/>
</dbReference>
<dbReference type="GO" id="GO:0043828">
    <property type="term" value="F:tRNA 2-selenouridine synthase activity"/>
    <property type="evidence" value="ECO:0007669"/>
    <property type="project" value="UniProtKB-EC"/>
</dbReference>
<dbReference type="GO" id="GO:0002098">
    <property type="term" value="P:tRNA wobble uridine modification"/>
    <property type="evidence" value="ECO:0007669"/>
    <property type="project" value="UniProtKB-UniRule"/>
</dbReference>
<dbReference type="CDD" id="cd01520">
    <property type="entry name" value="RHOD_YbbB"/>
    <property type="match status" value="1"/>
</dbReference>
<dbReference type="Gene3D" id="3.40.250.10">
    <property type="entry name" value="Rhodanese-like domain"/>
    <property type="match status" value="1"/>
</dbReference>
<dbReference type="HAMAP" id="MF_01622">
    <property type="entry name" value="tRNA_sel_U_synth"/>
    <property type="match status" value="1"/>
</dbReference>
<dbReference type="InterPro" id="IPR001763">
    <property type="entry name" value="Rhodanese-like_dom"/>
</dbReference>
<dbReference type="InterPro" id="IPR036873">
    <property type="entry name" value="Rhodanese-like_dom_sf"/>
</dbReference>
<dbReference type="InterPro" id="IPR017582">
    <property type="entry name" value="SelU"/>
</dbReference>
<dbReference type="NCBIfam" id="NF008750">
    <property type="entry name" value="PRK11784.1-2"/>
    <property type="match status" value="1"/>
</dbReference>
<dbReference type="NCBIfam" id="NF008751">
    <property type="entry name" value="PRK11784.1-3"/>
    <property type="match status" value="1"/>
</dbReference>
<dbReference type="NCBIfam" id="TIGR03167">
    <property type="entry name" value="tRNA_sel_U_synt"/>
    <property type="match status" value="1"/>
</dbReference>
<dbReference type="PANTHER" id="PTHR30401">
    <property type="entry name" value="TRNA 2-SELENOURIDINE SYNTHASE"/>
    <property type="match status" value="1"/>
</dbReference>
<dbReference type="PANTHER" id="PTHR30401:SF0">
    <property type="entry name" value="TRNA 2-SELENOURIDINE SYNTHASE"/>
    <property type="match status" value="1"/>
</dbReference>
<dbReference type="SMART" id="SM00450">
    <property type="entry name" value="RHOD"/>
    <property type="match status" value="1"/>
</dbReference>
<dbReference type="SUPFAM" id="SSF52821">
    <property type="entry name" value="Rhodanese/Cell cycle control phosphatase"/>
    <property type="match status" value="1"/>
</dbReference>
<dbReference type="PROSITE" id="PS50206">
    <property type="entry name" value="RHODANESE_3"/>
    <property type="match status" value="1"/>
</dbReference>
<organism>
    <name type="scientific">Pseudomonas syringae pv. syringae (strain B728a)</name>
    <dbReference type="NCBI Taxonomy" id="205918"/>
    <lineage>
        <taxon>Bacteria</taxon>
        <taxon>Pseudomonadati</taxon>
        <taxon>Pseudomonadota</taxon>
        <taxon>Gammaproteobacteria</taxon>
        <taxon>Pseudomonadales</taxon>
        <taxon>Pseudomonadaceae</taxon>
        <taxon>Pseudomonas</taxon>
        <taxon>Pseudomonas syringae</taxon>
    </lineage>
</organism>
<feature type="chain" id="PRO_0000210868" description="tRNA 2-selenouridine synthase">
    <location>
        <begin position="1"/>
        <end position="366"/>
    </location>
</feature>
<feature type="domain" description="Rhodanese" evidence="1">
    <location>
        <begin position="12"/>
        <end position="135"/>
    </location>
</feature>
<feature type="active site" description="S-selanylcysteine intermediate" evidence="1">
    <location>
        <position position="95"/>
    </location>
</feature>
<accession>Q4ZYK5</accession>
<sequence length="366" mass="41261">MADNSSDYRALFLNDVPMMDARAPVEFSKGAFPGVINLPLMNDIERQKVGTCYKQHGQDAAIQLGHQLVCGQVKDERVNAWIEFAKANPDGYLYCFRGGLRSQTVQRWLKDAGVDYPRVLGGYKAMRTFLLDTLHEAVSECSIVVLGGMTGTGKTEVLTQLRNSVDLEGIANHRGSSFGKRATGQPAQIDFENRLAIDLLKKRAAGIEQFVVEDESRLVGSCNVPLELHQAMQGCPMVWLEDSFENRVERILEDYVINLCAEFITVKGEEQGFGLFAERLLQSLNNIHKRLGGERHQRLSDLMQAALEEQQRSGAVDLHRGWIEGLLGEYYDPMYAYQREHKAARIEFAGDQTQVLAYLRERSEQR</sequence>
<protein>
    <recommendedName>
        <fullName evidence="1">tRNA 2-selenouridine synthase</fullName>
        <ecNumber evidence="1">2.9.1.3</ecNumber>
    </recommendedName>
</protein>
<evidence type="ECO:0000255" key="1">
    <source>
        <dbReference type="HAMAP-Rule" id="MF_01622"/>
    </source>
</evidence>
<proteinExistence type="inferred from homology"/>
<gene>
    <name evidence="1" type="primary">selU</name>
    <name type="ordered locus">Psyr_0697</name>
</gene>